<dbReference type="EMBL" id="AL766847">
    <property type="protein sequence ID" value="CAD46430.1"/>
    <property type="molecule type" value="Genomic_DNA"/>
</dbReference>
<dbReference type="RefSeq" id="WP_000966735.1">
    <property type="nucleotide sequence ID" value="NC_004368.1"/>
</dbReference>
<dbReference type="SMR" id="Q8E641"/>
<dbReference type="GeneID" id="66885718"/>
<dbReference type="KEGG" id="san:gbs0786"/>
<dbReference type="eggNOG" id="COG0353">
    <property type="taxonomic scope" value="Bacteria"/>
</dbReference>
<dbReference type="HOGENOM" id="CLU_060739_1_0_9"/>
<dbReference type="Proteomes" id="UP000000823">
    <property type="component" value="Chromosome"/>
</dbReference>
<dbReference type="GO" id="GO:0003677">
    <property type="term" value="F:DNA binding"/>
    <property type="evidence" value="ECO:0007669"/>
    <property type="project" value="UniProtKB-UniRule"/>
</dbReference>
<dbReference type="GO" id="GO:0008270">
    <property type="term" value="F:zinc ion binding"/>
    <property type="evidence" value="ECO:0007669"/>
    <property type="project" value="UniProtKB-KW"/>
</dbReference>
<dbReference type="GO" id="GO:0006310">
    <property type="term" value="P:DNA recombination"/>
    <property type="evidence" value="ECO:0007669"/>
    <property type="project" value="UniProtKB-UniRule"/>
</dbReference>
<dbReference type="GO" id="GO:0006281">
    <property type="term" value="P:DNA repair"/>
    <property type="evidence" value="ECO:0007669"/>
    <property type="project" value="UniProtKB-UniRule"/>
</dbReference>
<dbReference type="CDD" id="cd01025">
    <property type="entry name" value="TOPRIM_recR"/>
    <property type="match status" value="1"/>
</dbReference>
<dbReference type="Gene3D" id="3.30.60.80">
    <property type="match status" value="1"/>
</dbReference>
<dbReference type="Gene3D" id="3.40.1360.10">
    <property type="match status" value="1"/>
</dbReference>
<dbReference type="Gene3D" id="6.10.250.240">
    <property type="match status" value="1"/>
</dbReference>
<dbReference type="Gene3D" id="1.10.8.420">
    <property type="entry name" value="RecR Domain 1"/>
    <property type="match status" value="1"/>
</dbReference>
<dbReference type="HAMAP" id="MF_00017">
    <property type="entry name" value="RecR"/>
    <property type="match status" value="1"/>
</dbReference>
<dbReference type="InterPro" id="IPR000093">
    <property type="entry name" value="DNA_Rcmb_RecR"/>
</dbReference>
<dbReference type="InterPro" id="IPR023627">
    <property type="entry name" value="Rcmb_RecR"/>
</dbReference>
<dbReference type="InterPro" id="IPR015967">
    <property type="entry name" value="Rcmb_RecR_Znf"/>
</dbReference>
<dbReference type="InterPro" id="IPR006171">
    <property type="entry name" value="TOPRIM_dom"/>
</dbReference>
<dbReference type="InterPro" id="IPR034137">
    <property type="entry name" value="TOPRIM_RecR"/>
</dbReference>
<dbReference type="NCBIfam" id="TIGR00615">
    <property type="entry name" value="recR"/>
    <property type="match status" value="1"/>
</dbReference>
<dbReference type="PANTHER" id="PTHR30446">
    <property type="entry name" value="RECOMBINATION PROTEIN RECR"/>
    <property type="match status" value="1"/>
</dbReference>
<dbReference type="PANTHER" id="PTHR30446:SF0">
    <property type="entry name" value="RECOMBINATION PROTEIN RECR"/>
    <property type="match status" value="1"/>
</dbReference>
<dbReference type="Pfam" id="PF21175">
    <property type="entry name" value="RecR_C"/>
    <property type="match status" value="1"/>
</dbReference>
<dbReference type="Pfam" id="PF21176">
    <property type="entry name" value="RecR_HhH"/>
    <property type="match status" value="1"/>
</dbReference>
<dbReference type="Pfam" id="PF02132">
    <property type="entry name" value="RecR_ZnF"/>
    <property type="match status" value="1"/>
</dbReference>
<dbReference type="Pfam" id="PF13662">
    <property type="entry name" value="Toprim_4"/>
    <property type="match status" value="1"/>
</dbReference>
<dbReference type="SMART" id="SM00493">
    <property type="entry name" value="TOPRIM"/>
    <property type="match status" value="1"/>
</dbReference>
<dbReference type="SUPFAM" id="SSF111304">
    <property type="entry name" value="Recombination protein RecR"/>
    <property type="match status" value="1"/>
</dbReference>
<dbReference type="PROSITE" id="PS01300">
    <property type="entry name" value="RECR"/>
    <property type="match status" value="1"/>
</dbReference>
<dbReference type="PROSITE" id="PS50880">
    <property type="entry name" value="TOPRIM"/>
    <property type="match status" value="1"/>
</dbReference>
<name>RECR_STRA3</name>
<gene>
    <name evidence="1" type="primary">recR</name>
    <name type="ordered locus">gbs0786</name>
</gene>
<keyword id="KW-0227">DNA damage</keyword>
<keyword id="KW-0233">DNA recombination</keyword>
<keyword id="KW-0234">DNA repair</keyword>
<keyword id="KW-0479">Metal-binding</keyword>
<keyword id="KW-0862">Zinc</keyword>
<keyword id="KW-0863">Zinc-finger</keyword>
<protein>
    <recommendedName>
        <fullName evidence="1">Recombination protein RecR</fullName>
    </recommendedName>
</protein>
<feature type="chain" id="PRO_0000190393" description="Recombination protein RecR">
    <location>
        <begin position="1"/>
        <end position="198"/>
    </location>
</feature>
<feature type="domain" description="Toprim" evidence="1">
    <location>
        <begin position="80"/>
        <end position="175"/>
    </location>
</feature>
<feature type="zinc finger region" description="C4-type" evidence="1">
    <location>
        <begin position="57"/>
        <end position="72"/>
    </location>
</feature>
<comment type="function">
    <text evidence="1">May play a role in DNA repair. It seems to be involved in an RecBC-independent recombinational process of DNA repair. It may act with RecF and RecO.</text>
</comment>
<comment type="similarity">
    <text evidence="1">Belongs to the RecR family.</text>
</comment>
<evidence type="ECO:0000255" key="1">
    <source>
        <dbReference type="HAMAP-Rule" id="MF_00017"/>
    </source>
</evidence>
<sequence length="198" mass="21620">MLYPTPIAKLIDSFSKLPGIGTKTATRLAFYTIGMSDEDVNEFAKNLLAAKRELTYCSVCGNLTDDDPCLICTDKTRDQSVILVVEDSKDVSAMEKIQEYNGLYHVLHGLISPMNGISPDDINLKSLITRLMDGQVTEVIVATNATADGEATSMYISRVLKPAGIKVTRLARGLAVGSDIEYADEVTLLRAIENRTEL</sequence>
<organism>
    <name type="scientific">Streptococcus agalactiae serotype III (strain NEM316)</name>
    <dbReference type="NCBI Taxonomy" id="211110"/>
    <lineage>
        <taxon>Bacteria</taxon>
        <taxon>Bacillati</taxon>
        <taxon>Bacillota</taxon>
        <taxon>Bacilli</taxon>
        <taxon>Lactobacillales</taxon>
        <taxon>Streptococcaceae</taxon>
        <taxon>Streptococcus</taxon>
    </lineage>
</organism>
<accession>Q8E641</accession>
<proteinExistence type="inferred from homology"/>
<reference key="1">
    <citation type="journal article" date="2002" name="Mol. Microbiol.">
        <title>Genome sequence of Streptococcus agalactiae, a pathogen causing invasive neonatal disease.</title>
        <authorList>
            <person name="Glaser P."/>
            <person name="Rusniok C."/>
            <person name="Buchrieser C."/>
            <person name="Chevalier F."/>
            <person name="Frangeul L."/>
            <person name="Msadek T."/>
            <person name="Zouine M."/>
            <person name="Couve E."/>
            <person name="Lalioui L."/>
            <person name="Poyart C."/>
            <person name="Trieu-Cuot P."/>
            <person name="Kunst F."/>
        </authorList>
    </citation>
    <scope>NUCLEOTIDE SEQUENCE [LARGE SCALE GENOMIC DNA]</scope>
    <source>
        <strain>NEM316</strain>
    </source>
</reference>